<keyword id="KW-1015">Disulfide bond</keyword>
<keyword id="KW-0260">Enterotoxin</keyword>
<keyword id="KW-0479">Metal-binding</keyword>
<keyword id="KW-0964">Secreted</keyword>
<keyword id="KW-0732">Signal</keyword>
<keyword id="KW-0766">Superantigen</keyword>
<keyword id="KW-0800">Toxin</keyword>
<keyword id="KW-0843">Virulence</keyword>
<keyword id="KW-0862">Zinc</keyword>
<sequence length="257" mass="29669">MKKTAFTLLLFIALTLTTSPLVNGSEKSEEINEKDLRKKSELQGTALGNLKQIYYYNEKAKTENKESHDQFLQHTILFKGFFTDHSWYNDLLVDFDSKDIVDKYKGKKVDLYGAYYGYQCAGGTPNKTACMYGGVTLHDNNRLTEEKKVPINLWLDGKQNTVPLETVKTNKKNVTVQELDLQARRYLQEKYNLYNSDVFDGKVQRGLIVFHTSTEPSVNYDLFGAQGQYSNTLLRIYRDNKTINSENMHIDIYLYTS</sequence>
<proteinExistence type="inferred from homology"/>
<dbReference type="EMBL" id="BA000033">
    <property type="protein sequence ID" value="BAB95754.1"/>
    <property type="molecule type" value="Genomic_DNA"/>
</dbReference>
<dbReference type="SMR" id="P0A0L1"/>
<dbReference type="Allergome" id="2139">
    <property type="allergen name" value="Sta a SEA"/>
</dbReference>
<dbReference type="KEGG" id="sam:MW1889"/>
<dbReference type="HOGENOM" id="CLU_093855_0_0_9"/>
<dbReference type="PRO" id="PR:P0A0L1"/>
<dbReference type="GO" id="GO:0005576">
    <property type="term" value="C:extracellular region"/>
    <property type="evidence" value="ECO:0007669"/>
    <property type="project" value="UniProtKB-SubCell"/>
</dbReference>
<dbReference type="GO" id="GO:0046872">
    <property type="term" value="F:metal ion binding"/>
    <property type="evidence" value="ECO:0007669"/>
    <property type="project" value="UniProtKB-KW"/>
</dbReference>
<dbReference type="GO" id="GO:0090729">
    <property type="term" value="F:toxin activity"/>
    <property type="evidence" value="ECO:0007669"/>
    <property type="project" value="UniProtKB-KW"/>
</dbReference>
<dbReference type="Gene3D" id="2.40.50.110">
    <property type="match status" value="1"/>
</dbReference>
<dbReference type="Gene3D" id="3.10.20.120">
    <property type="match status" value="1"/>
</dbReference>
<dbReference type="InterPro" id="IPR008992">
    <property type="entry name" value="Enterotoxin"/>
</dbReference>
<dbReference type="InterPro" id="IPR006126">
    <property type="entry name" value="Staph/Strept_toxin_CS"/>
</dbReference>
<dbReference type="InterPro" id="IPR006173">
    <property type="entry name" value="Staph_tox_OB"/>
</dbReference>
<dbReference type="InterPro" id="IPR016091">
    <property type="entry name" value="SuperAg_toxin_C"/>
</dbReference>
<dbReference type="InterPro" id="IPR013307">
    <property type="entry name" value="Superantigen_bac"/>
</dbReference>
<dbReference type="InterPro" id="IPR006123">
    <property type="entry name" value="Toxin_b-grasp_Staph/Strep"/>
</dbReference>
<dbReference type="InterPro" id="IPR006177">
    <property type="entry name" value="Toxin_bac"/>
</dbReference>
<dbReference type="Pfam" id="PF02876">
    <property type="entry name" value="Stap_Strp_tox_C"/>
    <property type="match status" value="1"/>
</dbReference>
<dbReference type="Pfam" id="PF01123">
    <property type="entry name" value="Stap_Strp_toxin"/>
    <property type="match status" value="1"/>
</dbReference>
<dbReference type="PRINTS" id="PR00279">
    <property type="entry name" value="BACTRLTOXIN"/>
</dbReference>
<dbReference type="PRINTS" id="PR01898">
    <property type="entry name" value="SAGSUPRFAMLY"/>
</dbReference>
<dbReference type="SUPFAM" id="SSF50203">
    <property type="entry name" value="Bacterial enterotoxins"/>
    <property type="match status" value="1"/>
</dbReference>
<dbReference type="SUPFAM" id="SSF54334">
    <property type="entry name" value="Superantigen toxins, C-terminal domain"/>
    <property type="match status" value="1"/>
</dbReference>
<dbReference type="PROSITE" id="PS00277">
    <property type="entry name" value="STAPH_STREP_TOXIN_1"/>
    <property type="match status" value="1"/>
</dbReference>
<dbReference type="PROSITE" id="PS00278">
    <property type="entry name" value="STAPH_STREP_TOXIN_2"/>
    <property type="match status" value="1"/>
</dbReference>
<reference key="1">
    <citation type="journal article" date="2002" name="Lancet">
        <title>Genome and virulence determinants of high virulence community-acquired MRSA.</title>
        <authorList>
            <person name="Baba T."/>
            <person name="Takeuchi F."/>
            <person name="Kuroda M."/>
            <person name="Yuzawa H."/>
            <person name="Aoki K."/>
            <person name="Oguchi A."/>
            <person name="Nagai Y."/>
            <person name="Iwama N."/>
            <person name="Asano K."/>
            <person name="Naimi T."/>
            <person name="Kuroda H."/>
            <person name="Cui L."/>
            <person name="Yamamoto K."/>
            <person name="Hiramatsu K."/>
        </authorList>
    </citation>
    <scope>NUCLEOTIDE SEQUENCE [LARGE SCALE GENOMIC DNA]</scope>
    <source>
        <strain>MW2</strain>
    </source>
</reference>
<protein>
    <recommendedName>
        <fullName>Enterotoxin type A</fullName>
    </recommendedName>
    <alternativeName>
        <fullName>SEA</fullName>
    </alternativeName>
</protein>
<feature type="signal peptide" evidence="1">
    <location>
        <begin position="1"/>
        <end position="24"/>
    </location>
</feature>
<feature type="chain" id="PRO_0000035605" description="Enterotoxin type A">
    <location>
        <begin position="25"/>
        <end position="257"/>
    </location>
</feature>
<feature type="binding site" evidence="2">
    <location>
        <position position="211"/>
    </location>
    <ligand>
        <name>Zn(2+)</name>
        <dbReference type="ChEBI" id="CHEBI:29105"/>
    </ligand>
</feature>
<feature type="binding site" evidence="2">
    <location>
        <position position="249"/>
    </location>
    <ligand>
        <name>Zn(2+)</name>
        <dbReference type="ChEBI" id="CHEBI:29105"/>
    </ligand>
</feature>
<feature type="binding site" evidence="2">
    <location>
        <position position="251"/>
    </location>
    <ligand>
        <name>Zn(2+)</name>
        <dbReference type="ChEBI" id="CHEBI:29105"/>
    </ligand>
</feature>
<feature type="disulfide bond" evidence="2">
    <location>
        <begin position="120"/>
        <end position="130"/>
    </location>
</feature>
<accession>P0A0L1</accession>
<accession>P13163</accession>
<gene>
    <name type="primary">entA</name>
    <name type="ordered locus">MW1889</name>
</gene>
<organism>
    <name type="scientific">Staphylococcus aureus (strain MW2)</name>
    <dbReference type="NCBI Taxonomy" id="196620"/>
    <lineage>
        <taxon>Bacteria</taxon>
        <taxon>Bacillati</taxon>
        <taxon>Bacillota</taxon>
        <taxon>Bacilli</taxon>
        <taxon>Bacillales</taxon>
        <taxon>Staphylococcaceae</taxon>
        <taxon>Staphylococcus</taxon>
    </lineage>
</organism>
<evidence type="ECO:0000250" key="1"/>
<evidence type="ECO:0000250" key="2">
    <source>
        <dbReference type="UniProtKB" id="P0A0L2"/>
    </source>
</evidence>
<evidence type="ECO:0000305" key="3"/>
<comment type="function">
    <text evidence="2">Staphylococcal enterotoxin that activates the host immune system by binding as unprocessed molecules to major histocompatibility (MHC) complex class II and T-cell receptor (TCR) molecules. In turn, waves of cellular activation, cytokine production, and migration into the lung tissue and airways occur via alphabeta T-cells. Also causes the intoxication staphylococcal food poisoning syndrome. The illness is characterized by high fever, hypotension, diarrhea, shock, and in some cases death.</text>
</comment>
<comment type="cofactor">
    <cofactor evidence="1">
        <name>Zn(2+)</name>
        <dbReference type="ChEBI" id="CHEBI:29105"/>
    </cofactor>
    <text evidence="1">Binds 1 zinc ion per subunit. The zinc ion is necessary for the toxin interaction with MHC class II.</text>
</comment>
<comment type="subunit">
    <text evidence="2">Monomer. Interacts with MHC class II molecules alpha/HLA-DRB1 and beta/HLA-DRA chains. The interaction with MHC-II molecules occurs at both zinc-dependent and zinc-independent sites. Interacts with T-cell receptor beta variable 7-9/TRBV7-9.</text>
</comment>
<comment type="subcellular location">
    <subcellularLocation>
        <location evidence="1">Secreted</location>
    </subcellularLocation>
</comment>
<comment type="similarity">
    <text evidence="3">Belongs to the staphylococcal/streptococcal toxin family.</text>
</comment>
<name>ETXA_STAAW</name>